<gene>
    <name type="primary">yhaJ</name>
    <name type="ordered locus">Z4459</name>
    <name type="ordered locus">ECs3987</name>
</gene>
<name>YHAJ_ECO57</name>
<organism>
    <name type="scientific">Escherichia coli O157:H7</name>
    <dbReference type="NCBI Taxonomy" id="83334"/>
    <lineage>
        <taxon>Bacteria</taxon>
        <taxon>Pseudomonadati</taxon>
        <taxon>Pseudomonadota</taxon>
        <taxon>Gammaproteobacteria</taxon>
        <taxon>Enterobacterales</taxon>
        <taxon>Enterobacteriaceae</taxon>
        <taxon>Escherichia</taxon>
    </lineage>
</organism>
<protein>
    <recommendedName>
        <fullName>HTH-type transcriptional regulator YhaJ</fullName>
    </recommendedName>
</protein>
<reference key="1">
    <citation type="journal article" date="2001" name="Nature">
        <title>Genome sequence of enterohaemorrhagic Escherichia coli O157:H7.</title>
        <authorList>
            <person name="Perna N.T."/>
            <person name="Plunkett G. III"/>
            <person name="Burland V."/>
            <person name="Mau B."/>
            <person name="Glasner J.D."/>
            <person name="Rose D.J."/>
            <person name="Mayhew G.F."/>
            <person name="Evans P.S."/>
            <person name="Gregor J."/>
            <person name="Kirkpatrick H.A."/>
            <person name="Posfai G."/>
            <person name="Hackett J."/>
            <person name="Klink S."/>
            <person name="Boutin A."/>
            <person name="Shao Y."/>
            <person name="Miller L."/>
            <person name="Grotbeck E.J."/>
            <person name="Davis N.W."/>
            <person name="Lim A."/>
            <person name="Dimalanta E.T."/>
            <person name="Potamousis K."/>
            <person name="Apodaca J."/>
            <person name="Anantharaman T.S."/>
            <person name="Lin J."/>
            <person name="Yen G."/>
            <person name="Schwartz D.C."/>
            <person name="Welch R.A."/>
            <person name="Blattner F.R."/>
        </authorList>
    </citation>
    <scope>NUCLEOTIDE SEQUENCE [LARGE SCALE GENOMIC DNA]</scope>
    <source>
        <strain>O157:H7 / EDL933 / ATCC 700927 / EHEC</strain>
    </source>
</reference>
<reference key="2">
    <citation type="journal article" date="2001" name="DNA Res.">
        <title>Complete genome sequence of enterohemorrhagic Escherichia coli O157:H7 and genomic comparison with a laboratory strain K-12.</title>
        <authorList>
            <person name="Hayashi T."/>
            <person name="Makino K."/>
            <person name="Ohnishi M."/>
            <person name="Kurokawa K."/>
            <person name="Ishii K."/>
            <person name="Yokoyama K."/>
            <person name="Han C.-G."/>
            <person name="Ohtsubo E."/>
            <person name="Nakayama K."/>
            <person name="Murata T."/>
            <person name="Tanaka M."/>
            <person name="Tobe T."/>
            <person name="Iida T."/>
            <person name="Takami H."/>
            <person name="Honda T."/>
            <person name="Sasakawa C."/>
            <person name="Ogasawara N."/>
            <person name="Yasunaga T."/>
            <person name="Kuhara S."/>
            <person name="Shiba T."/>
            <person name="Hattori M."/>
            <person name="Shinagawa H."/>
        </authorList>
    </citation>
    <scope>NUCLEOTIDE SEQUENCE [LARGE SCALE GENOMIC DNA]</scope>
    <source>
        <strain>O157:H7 / Sakai / RIMD 0509952 / EHEC</strain>
    </source>
</reference>
<reference key="3">
    <citation type="journal article" date="2016" name="PLoS Pathog.">
        <title>A highly conserved bacterial D-serine uptake system links host metabolism and virulence.</title>
        <authorList>
            <person name="Connolly J.P."/>
            <person name="Gabrielsen M."/>
            <person name="Goldstone R.J."/>
            <person name="Grinter R."/>
            <person name="Wang D."/>
            <person name="Cogdell R.J."/>
            <person name="Walker D."/>
            <person name="Smith D.G."/>
            <person name="Roe A.J."/>
        </authorList>
    </citation>
    <scope>FUNCTION IN VIRULENCE</scope>
    <scope>INDUCTION</scope>
    <scope>DISRUPTION PHENOTYPE</scope>
    <scope>DNA-BINDING</scope>
    <source>
        <strain>O157:H7 / EDL933 / ATCC 700927 / EHEC</strain>
    </source>
</reference>
<comment type="function">
    <text evidence="2">Positive regulator partially required for expression of genes in the locus of effacement (LEE) large pathogenicity island (PAI). Also partially responsible for expression of neighboring gene dlsT (yhaO) during late exponential growth. Binds to DNA of promoter 1 in LEE and DNA from the dlsT promoter region.</text>
</comment>
<comment type="induction">
    <text evidence="2">Induced under conditions that maximally induce expression of the locus of effacement (LEE) large pathogenicity island (PAI). Not induced by D-serine.</text>
</comment>
<comment type="disruption phenotype">
    <text evidence="2">Decreased expression genes in LEE and of neighboring gene dlsT. Decreased secretion of a number of substrates for type III secretion system (T3SS) encoded in the locus of effacement (LEE) including Tir, EspA and EspD; at least EspD is also decreased intracellularly. Expression of 103 genes is altered; down-regulation of LEE PAI (including the T3SS) plus other genes as well as up-regulation of 29 genes. Decreased ability to form attachment/effacing lesions on HeLa cells; those which form attachments condense host actin less well (pedestal formation) (PubMed:26727373).</text>
</comment>
<comment type="similarity">
    <text evidence="3">Belongs to the LysR transcriptional regulatory family.</text>
</comment>
<evidence type="ECO:0000255" key="1">
    <source>
        <dbReference type="PROSITE-ProRule" id="PRU00253"/>
    </source>
</evidence>
<evidence type="ECO:0000269" key="2">
    <source>
    </source>
</evidence>
<evidence type="ECO:0000305" key="3"/>
<keyword id="KW-0010">Activator</keyword>
<keyword id="KW-0238">DNA-binding</keyword>
<keyword id="KW-1185">Reference proteome</keyword>
<keyword id="KW-0804">Transcription</keyword>
<keyword id="KW-0805">Transcription regulation</keyword>
<keyword id="KW-0843">Virulence</keyword>
<sequence>MAKERALTLEALRVMDAIDRRGSFAAAADELGRVPSALSYTMQKLEEELDVVLFDRSGHRTKFTNVGRMLLERGRVLLEAADKLTTDAEALARGWETHLTIVTEALVPTPAFFPLIDKLAAKANTQLAIITEVLAGAWERLEQGRADIVIAPDMHFRSSSEINSRKLYTLMNVYVAAPDHPIHQEPEPLSEVTRVKYRGIAVADTARERPVLTVQLLDKQPRLTVSTIEDKRQALLAGLGVATMPYPMVEKDIAEGRLRVVSPESTSEIDIIMAWRRDSMGEAKSWCLREIPKLFNGK</sequence>
<dbReference type="EMBL" id="AE005174">
    <property type="protein sequence ID" value="AAG58238.1"/>
    <property type="molecule type" value="Genomic_DNA"/>
</dbReference>
<dbReference type="EMBL" id="BA000007">
    <property type="protein sequence ID" value="BAB37410.1"/>
    <property type="molecule type" value="Genomic_DNA"/>
</dbReference>
<dbReference type="PIR" id="C91127">
    <property type="entry name" value="C91127"/>
</dbReference>
<dbReference type="RefSeq" id="NP_312014.1">
    <property type="nucleotide sequence ID" value="NC_002695.1"/>
</dbReference>
<dbReference type="RefSeq" id="WP_001041009.1">
    <property type="nucleotide sequence ID" value="NZ_VOAI01000009.1"/>
</dbReference>
<dbReference type="SMR" id="P67661"/>
<dbReference type="STRING" id="155864.Z4459"/>
<dbReference type="GeneID" id="75173279"/>
<dbReference type="GeneID" id="916179"/>
<dbReference type="KEGG" id="ece:Z4459"/>
<dbReference type="KEGG" id="ecs:ECs_3987"/>
<dbReference type="PATRIC" id="fig|386585.9.peg.4161"/>
<dbReference type="eggNOG" id="COG0583">
    <property type="taxonomic scope" value="Bacteria"/>
</dbReference>
<dbReference type="HOGENOM" id="CLU_039613_35_1_6"/>
<dbReference type="OMA" id="NIIMAWR"/>
<dbReference type="Proteomes" id="UP000000558">
    <property type="component" value="Chromosome"/>
</dbReference>
<dbReference type="Proteomes" id="UP000002519">
    <property type="component" value="Chromosome"/>
</dbReference>
<dbReference type="GO" id="GO:0003700">
    <property type="term" value="F:DNA-binding transcription factor activity"/>
    <property type="evidence" value="ECO:0007669"/>
    <property type="project" value="InterPro"/>
</dbReference>
<dbReference type="GO" id="GO:0000976">
    <property type="term" value="F:transcription cis-regulatory region binding"/>
    <property type="evidence" value="ECO:0007669"/>
    <property type="project" value="TreeGrafter"/>
</dbReference>
<dbReference type="FunFam" id="1.10.10.10:FF:000063">
    <property type="entry name" value="LysR family transcriptional regulator"/>
    <property type="match status" value="1"/>
</dbReference>
<dbReference type="FunFam" id="3.40.190.290:FF:000004">
    <property type="entry name" value="LysR family transcriptional regulator"/>
    <property type="match status" value="1"/>
</dbReference>
<dbReference type="Gene3D" id="3.40.190.290">
    <property type="match status" value="1"/>
</dbReference>
<dbReference type="Gene3D" id="1.10.10.10">
    <property type="entry name" value="Winged helix-like DNA-binding domain superfamily/Winged helix DNA-binding domain"/>
    <property type="match status" value="1"/>
</dbReference>
<dbReference type="InterPro" id="IPR005119">
    <property type="entry name" value="LysR_subst-bd"/>
</dbReference>
<dbReference type="InterPro" id="IPR000847">
    <property type="entry name" value="Tscrpt_reg_HTH_LysR"/>
</dbReference>
<dbReference type="InterPro" id="IPR036388">
    <property type="entry name" value="WH-like_DNA-bd_sf"/>
</dbReference>
<dbReference type="InterPro" id="IPR036390">
    <property type="entry name" value="WH_DNA-bd_sf"/>
</dbReference>
<dbReference type="PANTHER" id="PTHR30126">
    <property type="entry name" value="HTH-TYPE TRANSCRIPTIONAL REGULATOR"/>
    <property type="match status" value="1"/>
</dbReference>
<dbReference type="PANTHER" id="PTHR30126:SF22">
    <property type="entry name" value="HTH-TYPE TRANSCRIPTIONAL REGULATOR YHAJ-RELATED"/>
    <property type="match status" value="1"/>
</dbReference>
<dbReference type="Pfam" id="PF00126">
    <property type="entry name" value="HTH_1"/>
    <property type="match status" value="1"/>
</dbReference>
<dbReference type="Pfam" id="PF03466">
    <property type="entry name" value="LysR_substrate"/>
    <property type="match status" value="1"/>
</dbReference>
<dbReference type="SUPFAM" id="SSF53850">
    <property type="entry name" value="Periplasmic binding protein-like II"/>
    <property type="match status" value="1"/>
</dbReference>
<dbReference type="SUPFAM" id="SSF46785">
    <property type="entry name" value="Winged helix' DNA-binding domain"/>
    <property type="match status" value="1"/>
</dbReference>
<dbReference type="PROSITE" id="PS50931">
    <property type="entry name" value="HTH_LYSR"/>
    <property type="match status" value="1"/>
</dbReference>
<accession>P67661</accession>
<accession>P42623</accession>
<feature type="chain" id="PRO_0000105797" description="HTH-type transcriptional regulator YhaJ">
    <location>
        <begin position="1"/>
        <end position="298"/>
    </location>
</feature>
<feature type="domain" description="HTH lysR-type" evidence="1">
    <location>
        <begin position="7"/>
        <end position="64"/>
    </location>
</feature>
<feature type="DNA-binding region" description="H-T-H motif" evidence="1">
    <location>
        <begin position="24"/>
        <end position="43"/>
    </location>
</feature>
<proteinExistence type="evidence at protein level"/>